<gene>
    <name type="ORF">SKA58_08619</name>
</gene>
<protein>
    <recommendedName>
        <fullName>D-mannonate dehydratase</fullName>
        <shortName>ManD</shortName>
        <ecNumber>4.2.1.8</ecNumber>
    </recommendedName>
</protein>
<dbReference type="EC" id="4.2.1.8"/>
<dbReference type="EMBL" id="AAQG01000013">
    <property type="protein sequence ID" value="EAT08014.1"/>
    <property type="molecule type" value="Genomic_DNA"/>
</dbReference>
<dbReference type="PDB" id="3THU">
    <property type="method" value="X-ray"/>
    <property type="resolution" value="1.80 A"/>
    <property type="chains" value="A/B/C=1-403"/>
</dbReference>
<dbReference type="PDBsum" id="3THU"/>
<dbReference type="SMR" id="Q1NAJ2"/>
<dbReference type="STRING" id="314266.SKA58_08619"/>
<dbReference type="eggNOG" id="COG4948">
    <property type="taxonomic scope" value="Bacteria"/>
</dbReference>
<dbReference type="HOGENOM" id="CLU_030273_6_1_5"/>
<dbReference type="OrthoDB" id="9802699at2"/>
<dbReference type="UniPathway" id="UPA00246"/>
<dbReference type="EvolutionaryTrace" id="Q1NAJ2"/>
<dbReference type="Proteomes" id="UP000005395">
    <property type="component" value="Unassembled WGS sequence"/>
</dbReference>
<dbReference type="GO" id="GO:0000287">
    <property type="term" value="F:magnesium ion binding"/>
    <property type="evidence" value="ECO:0000314"/>
    <property type="project" value="UniProtKB"/>
</dbReference>
<dbReference type="GO" id="GO:0008927">
    <property type="term" value="F:mannonate dehydratase activity"/>
    <property type="evidence" value="ECO:0000314"/>
    <property type="project" value="CACAO"/>
</dbReference>
<dbReference type="GO" id="GO:0009063">
    <property type="term" value="P:amino acid catabolic process"/>
    <property type="evidence" value="ECO:0007669"/>
    <property type="project" value="InterPro"/>
</dbReference>
<dbReference type="GO" id="GO:0016052">
    <property type="term" value="P:carbohydrate catabolic process"/>
    <property type="evidence" value="ECO:0000314"/>
    <property type="project" value="UniProtKB"/>
</dbReference>
<dbReference type="CDD" id="cd03322">
    <property type="entry name" value="RspA"/>
    <property type="match status" value="1"/>
</dbReference>
<dbReference type="FunFam" id="3.20.20.120:FF:000004">
    <property type="entry name" value="D-galactonate dehydratase family protein"/>
    <property type="match status" value="1"/>
</dbReference>
<dbReference type="FunFam" id="3.30.390.10:FF:000002">
    <property type="entry name" value="D-galactonate dehydratase family protein"/>
    <property type="match status" value="1"/>
</dbReference>
<dbReference type="Gene3D" id="3.20.20.120">
    <property type="entry name" value="Enolase-like C-terminal domain"/>
    <property type="match status" value="1"/>
</dbReference>
<dbReference type="Gene3D" id="3.30.390.10">
    <property type="entry name" value="Enolase-like, N-terminal domain"/>
    <property type="match status" value="1"/>
</dbReference>
<dbReference type="InterPro" id="IPR053379">
    <property type="entry name" value="D-mannonate_dehydratase_GalD"/>
</dbReference>
<dbReference type="InterPro" id="IPR034593">
    <property type="entry name" value="DgoD-like"/>
</dbReference>
<dbReference type="InterPro" id="IPR036849">
    <property type="entry name" value="Enolase-like_C_sf"/>
</dbReference>
<dbReference type="InterPro" id="IPR029017">
    <property type="entry name" value="Enolase-like_N"/>
</dbReference>
<dbReference type="InterPro" id="IPR029065">
    <property type="entry name" value="Enolase_C-like"/>
</dbReference>
<dbReference type="InterPro" id="IPR034587">
    <property type="entry name" value="MAND"/>
</dbReference>
<dbReference type="InterPro" id="IPR018110">
    <property type="entry name" value="Mandel_Rmase/mucon_lact_enz_CS"/>
</dbReference>
<dbReference type="InterPro" id="IPR013342">
    <property type="entry name" value="Mandelate_racemase_C"/>
</dbReference>
<dbReference type="InterPro" id="IPR013341">
    <property type="entry name" value="Mandelate_racemase_N_dom"/>
</dbReference>
<dbReference type="NCBIfam" id="NF043051">
    <property type="entry name" value="ManoateDhtManD"/>
    <property type="match status" value="1"/>
</dbReference>
<dbReference type="NCBIfam" id="NF011654">
    <property type="entry name" value="PRK15072.1"/>
    <property type="match status" value="1"/>
</dbReference>
<dbReference type="PANTHER" id="PTHR48080">
    <property type="entry name" value="D-GALACTONATE DEHYDRATASE-RELATED"/>
    <property type="match status" value="1"/>
</dbReference>
<dbReference type="PANTHER" id="PTHR48080:SF6">
    <property type="entry name" value="STARVATION-SENSING PROTEIN RSPA"/>
    <property type="match status" value="1"/>
</dbReference>
<dbReference type="Pfam" id="PF13378">
    <property type="entry name" value="MR_MLE_C"/>
    <property type="match status" value="1"/>
</dbReference>
<dbReference type="Pfam" id="PF02746">
    <property type="entry name" value="MR_MLE_N"/>
    <property type="match status" value="1"/>
</dbReference>
<dbReference type="SFLD" id="SFLDS00001">
    <property type="entry name" value="Enolase"/>
    <property type="match status" value="1"/>
</dbReference>
<dbReference type="SFLD" id="SFLDF00001">
    <property type="entry name" value="mannonate_dehydratase"/>
    <property type="match status" value="1"/>
</dbReference>
<dbReference type="SMART" id="SM00922">
    <property type="entry name" value="MR_MLE"/>
    <property type="match status" value="1"/>
</dbReference>
<dbReference type="SUPFAM" id="SSF51604">
    <property type="entry name" value="Enolase C-terminal domain-like"/>
    <property type="match status" value="1"/>
</dbReference>
<dbReference type="SUPFAM" id="SSF54826">
    <property type="entry name" value="Enolase N-terminal domain-like"/>
    <property type="match status" value="1"/>
</dbReference>
<dbReference type="PROSITE" id="PS00908">
    <property type="entry name" value="MR_MLE_1"/>
    <property type="match status" value="1"/>
</dbReference>
<proteinExistence type="evidence at protein level"/>
<sequence length="403" mass="44964">MPKIIDAKVIITCPGRNFVTLKIMTDEGVYGLGDATLNGRELAVASYLTDHVIPCLIGRDAHRIEDLWQYLYKGAYWRRGPVTMTAIAAVDMALWDIKGKIAGLPVYQLLGGASREGVMVYGHANGTTIEDTVKVALDYQAQGYKAIRLQCGVPGMASTYGVSKDKYFYEPADADLPTENIWNTSKYLRIVPELFKAARESLGWDVHLLHDIHHRLTPIEAGRLGQDLEPYRPFWLEDATPAENQEAFRLIRQHTTAPLAVGEIFNSIWDAKDLIQNQLIDYIRATVVHAGGITHLRRIAALADLYQIRTGCHGATDLSPVCMAAALHFDLSVPNFGIQEYMRHMPETDAVFPHAYTFADGMMHPGDQPGLGVDIDEDLAAGYEYKRAFLPVNRLEDGTMFNW</sequence>
<comment type="function">
    <text evidence="2">Catalyzes the dehydration of D-mannonate. Has no detectable activity with a panel of 70 other acid sugars (in vitro).</text>
</comment>
<comment type="catalytic activity">
    <reaction evidence="2">
        <text>D-mannonate = 2-dehydro-3-deoxy-D-gluconate + H2O</text>
        <dbReference type="Rhea" id="RHEA:20097"/>
        <dbReference type="ChEBI" id="CHEBI:15377"/>
        <dbReference type="ChEBI" id="CHEBI:17767"/>
        <dbReference type="ChEBI" id="CHEBI:57990"/>
        <dbReference type="EC" id="4.2.1.8"/>
    </reaction>
</comment>
<comment type="cofactor">
    <cofactor evidence="2">
        <name>Mg(2+)</name>
        <dbReference type="ChEBI" id="CHEBI:18420"/>
    </cofactor>
    <text evidence="2">Binds 1 Mg(2+) ion per subunit.</text>
</comment>
<comment type="biophysicochemical properties">
    <kinetics>
        <text evidence="2">kcat is 2.0 sec(-1) with D-mannonate.</text>
    </kinetics>
</comment>
<comment type="pathway">
    <text>Carbohydrate metabolism; pentose and glucuronate interconversion.</text>
</comment>
<comment type="similarity">
    <text evidence="3">Belongs to the mandelate racemase/muconate lactonizing enzyme family. GalD subfamily.</text>
</comment>
<organism>
    <name type="scientific">Sphingomonas sp. (strain SKA58)</name>
    <dbReference type="NCBI Taxonomy" id="314266"/>
    <lineage>
        <taxon>Bacteria</taxon>
        <taxon>Pseudomonadati</taxon>
        <taxon>Pseudomonadota</taxon>
        <taxon>Alphaproteobacteria</taxon>
        <taxon>Sphingomonadales</taxon>
        <taxon>Sphingomonadaceae</taxon>
        <taxon>Sphingomonas</taxon>
    </lineage>
</organism>
<name>MAND_SPHSS</name>
<evidence type="ECO:0000250" key="1"/>
<evidence type="ECO:0000269" key="2">
    <source>
    </source>
</evidence>
<evidence type="ECO:0000305" key="3"/>
<evidence type="ECO:0007829" key="4">
    <source>
        <dbReference type="PDB" id="3THU"/>
    </source>
</evidence>
<feature type="chain" id="PRO_0000429874" description="D-mannonate dehydratase">
    <location>
        <begin position="1"/>
        <end position="403"/>
    </location>
</feature>
<feature type="active site" description="Proton donor/acceptor" evidence="1">
    <location>
        <position position="160"/>
    </location>
</feature>
<feature type="active site" description="Proton donor/acceptor" evidence="1">
    <location>
        <position position="213"/>
    </location>
</feature>
<feature type="binding site" evidence="1">
    <location>
        <position position="38"/>
    </location>
    <ligand>
        <name>substrate</name>
    </ligand>
</feature>
<feature type="binding site" evidence="1">
    <location>
        <position position="123"/>
    </location>
    <ligand>
        <name>substrate</name>
    </ligand>
</feature>
<feature type="binding site" evidence="2">
    <location>
        <position position="211"/>
    </location>
    <ligand>
        <name>Mg(2+)</name>
        <dbReference type="ChEBI" id="CHEBI:18420"/>
    </ligand>
</feature>
<feature type="binding site" evidence="2">
    <location>
        <position position="237"/>
    </location>
    <ligand>
        <name>Mg(2+)</name>
        <dbReference type="ChEBI" id="CHEBI:18420"/>
    </ligand>
</feature>
<feature type="binding site" evidence="2">
    <location>
        <position position="263"/>
    </location>
    <ligand>
        <name>Mg(2+)</name>
        <dbReference type="ChEBI" id="CHEBI:18420"/>
    </ligand>
</feature>
<feature type="binding site" evidence="1">
    <location>
        <position position="263"/>
    </location>
    <ligand>
        <name>substrate</name>
    </ligand>
</feature>
<feature type="binding site" evidence="1">
    <location>
        <position position="284"/>
    </location>
    <ligand>
        <name>substrate</name>
    </ligand>
</feature>
<feature type="binding site" evidence="1">
    <location>
        <position position="313"/>
    </location>
    <ligand>
        <name>substrate</name>
    </ligand>
</feature>
<feature type="binding site" evidence="1">
    <location>
        <position position="317"/>
    </location>
    <ligand>
        <name>substrate</name>
    </ligand>
</feature>
<feature type="binding site" evidence="1">
    <location>
        <position position="340"/>
    </location>
    <ligand>
        <name>substrate</name>
    </ligand>
</feature>
<feature type="site" description="Important for activity and substrate specificity; Ala is observed in family members with high D-mannonate dehydratase activity that have no activity with D-gluconate" evidence="1">
    <location>
        <position position="315"/>
    </location>
</feature>
<feature type="strand" evidence="4">
    <location>
        <begin position="3"/>
        <end position="12"/>
    </location>
</feature>
<feature type="strand" evidence="4">
    <location>
        <begin position="14"/>
        <end position="16"/>
    </location>
</feature>
<feature type="strand" evidence="4">
    <location>
        <begin position="18"/>
        <end position="25"/>
    </location>
</feature>
<feature type="strand" evidence="4">
    <location>
        <begin position="30"/>
        <end position="34"/>
    </location>
</feature>
<feature type="helix" evidence="4">
    <location>
        <begin position="41"/>
        <end position="50"/>
    </location>
</feature>
<feature type="helix" evidence="4">
    <location>
        <begin position="52"/>
        <end position="56"/>
    </location>
</feature>
<feature type="helix" evidence="4">
    <location>
        <begin position="64"/>
        <end position="74"/>
    </location>
</feature>
<feature type="helix" evidence="4">
    <location>
        <begin position="81"/>
        <end position="102"/>
    </location>
</feature>
<feature type="helix" evidence="4">
    <location>
        <begin position="106"/>
        <end position="109"/>
    </location>
</feature>
<feature type="strand" evidence="4">
    <location>
        <begin position="114"/>
        <end position="128"/>
    </location>
</feature>
<feature type="helix" evidence="4">
    <location>
        <begin position="129"/>
        <end position="141"/>
    </location>
</feature>
<feature type="strand" evidence="4">
    <location>
        <begin position="145"/>
        <end position="151"/>
    </location>
</feature>
<feature type="strand" evidence="4">
    <location>
        <begin position="174"/>
        <end position="176"/>
    </location>
</feature>
<feature type="strand" evidence="4">
    <location>
        <begin position="179"/>
        <end position="182"/>
    </location>
</feature>
<feature type="helix" evidence="4">
    <location>
        <begin position="184"/>
        <end position="202"/>
    </location>
</feature>
<feature type="strand" evidence="4">
    <location>
        <begin position="204"/>
        <end position="211"/>
    </location>
</feature>
<feature type="helix" evidence="4">
    <location>
        <begin position="218"/>
        <end position="228"/>
    </location>
</feature>
<feature type="helix" evidence="4">
    <location>
        <begin position="229"/>
        <end position="231"/>
    </location>
</feature>
<feature type="strand" evidence="4">
    <location>
        <begin position="234"/>
        <end position="237"/>
    </location>
</feature>
<feature type="helix" evidence="4">
    <location>
        <begin position="245"/>
        <end position="248"/>
    </location>
</feature>
<feature type="helix" evidence="4">
    <location>
        <begin position="249"/>
        <end position="254"/>
    </location>
</feature>
<feature type="strand" evidence="4">
    <location>
        <begin position="259"/>
        <end position="261"/>
    </location>
</feature>
<feature type="helix" evidence="4">
    <location>
        <begin position="268"/>
        <end position="270"/>
    </location>
</feature>
<feature type="helix" evidence="4">
    <location>
        <begin position="272"/>
        <end position="276"/>
    </location>
</feature>
<feature type="strand" evidence="4">
    <location>
        <begin position="281"/>
        <end position="283"/>
    </location>
</feature>
<feature type="turn" evidence="4">
    <location>
        <begin position="287"/>
        <end position="291"/>
    </location>
</feature>
<feature type="helix" evidence="4">
    <location>
        <begin position="292"/>
        <end position="304"/>
    </location>
</feature>
<feature type="turn" evidence="4">
    <location>
        <begin position="305"/>
        <end position="307"/>
    </location>
</feature>
<feature type="helix" evidence="4">
    <location>
        <begin position="320"/>
        <end position="332"/>
    </location>
</feature>
<feature type="helix" evidence="4">
    <location>
        <begin position="346"/>
        <end position="351"/>
    </location>
</feature>
<feature type="strand" evidence="4">
    <location>
        <begin position="357"/>
        <end position="359"/>
    </location>
</feature>
<feature type="strand" evidence="4">
    <location>
        <begin position="362"/>
        <end position="364"/>
    </location>
</feature>
<feature type="strand" evidence="4">
    <location>
        <begin position="367"/>
        <end position="370"/>
    </location>
</feature>
<feature type="helix" evidence="4">
    <location>
        <begin position="377"/>
        <end position="380"/>
    </location>
</feature>
<feature type="strand" evidence="4">
    <location>
        <begin position="392"/>
        <end position="395"/>
    </location>
</feature>
<keyword id="KW-0002">3D-structure</keyword>
<keyword id="KW-0119">Carbohydrate metabolism</keyword>
<keyword id="KW-0456">Lyase</keyword>
<keyword id="KW-0460">Magnesium</keyword>
<keyword id="KW-0479">Metal-binding</keyword>
<keyword id="KW-1185">Reference proteome</keyword>
<accession>Q1NAJ2</accession>
<reference key="1">
    <citation type="submission" date="2006-03" db="EMBL/GenBank/DDBJ databases">
        <authorList>
            <person name="Hagstrom A."/>
            <person name="Ferriera S."/>
            <person name="Johnson J."/>
            <person name="Kravitz S."/>
            <person name="Halpern A."/>
            <person name="Remington K."/>
            <person name="Beeson K."/>
            <person name="Tran B."/>
            <person name="Rogers Y.-H."/>
            <person name="Friedman R."/>
            <person name="Venter J.C."/>
        </authorList>
    </citation>
    <scope>NUCLEOTIDE SEQUENCE [LARGE SCALE GENOMIC DNA]</scope>
    <source>
        <strain>SKA58</strain>
    </source>
</reference>
<reference key="2">
    <citation type="journal article" date="2014" name="Biochemistry">
        <title>Discovery of function in the enolase superfamily: D-mannonate and D-gluconate dehydratases in the D-mannonate dehydratase subgroup.</title>
        <authorList>
            <person name="Wichelecki D.J."/>
            <person name="Balthazor B.M."/>
            <person name="Chau A.C."/>
            <person name="Vetting M.W."/>
            <person name="Fedorov A.A."/>
            <person name="Fedorov E.V."/>
            <person name="Lukk T."/>
            <person name="Patskovsky Y.V."/>
            <person name="Stead M.B."/>
            <person name="Hillerich B.S."/>
            <person name="Seidel R.D."/>
            <person name="Almo S.C."/>
            <person name="Gerlt J.A."/>
        </authorList>
    </citation>
    <scope>X-RAY CRYSTALLOGRAPHY (1.80 ANGSTROMS) IN COMPLEX WITH MAGNESIUM</scope>
    <scope>FUNCTION</scope>
    <scope>CATALYTIC ACTIVITY</scope>
    <scope>COFACTOR</scope>
    <scope>BIOPHYSICOCHEMICAL PROPERTIES</scope>
    <source>
        <strain>SKA58</strain>
    </source>
</reference>